<keyword id="KW-0963">Cytoplasm</keyword>
<keyword id="KW-0312">Gluconeogenesis</keyword>
<keyword id="KW-0324">Glycolysis</keyword>
<keyword id="KW-0413">Isomerase</keyword>
<dbReference type="EC" id="5.3.1.9" evidence="1"/>
<dbReference type="EMBL" id="CP000241">
    <property type="protein sequence ID" value="ABF85172.1"/>
    <property type="molecule type" value="Genomic_DNA"/>
</dbReference>
<dbReference type="RefSeq" id="WP_000957606.1">
    <property type="nucleotide sequence ID" value="NC_008086.1"/>
</dbReference>
<dbReference type="SMR" id="Q1CSA0"/>
<dbReference type="KEGG" id="hpa:HPAG1_1105"/>
<dbReference type="HOGENOM" id="CLU_017947_3_1_7"/>
<dbReference type="UniPathway" id="UPA00109">
    <property type="reaction ID" value="UER00181"/>
</dbReference>
<dbReference type="UniPathway" id="UPA00138"/>
<dbReference type="GO" id="GO:0005829">
    <property type="term" value="C:cytosol"/>
    <property type="evidence" value="ECO:0007669"/>
    <property type="project" value="TreeGrafter"/>
</dbReference>
<dbReference type="GO" id="GO:0097367">
    <property type="term" value="F:carbohydrate derivative binding"/>
    <property type="evidence" value="ECO:0007669"/>
    <property type="project" value="InterPro"/>
</dbReference>
<dbReference type="GO" id="GO:0004347">
    <property type="term" value="F:glucose-6-phosphate isomerase activity"/>
    <property type="evidence" value="ECO:0007669"/>
    <property type="project" value="UniProtKB-UniRule"/>
</dbReference>
<dbReference type="GO" id="GO:0048029">
    <property type="term" value="F:monosaccharide binding"/>
    <property type="evidence" value="ECO:0007669"/>
    <property type="project" value="TreeGrafter"/>
</dbReference>
<dbReference type="GO" id="GO:0006094">
    <property type="term" value="P:gluconeogenesis"/>
    <property type="evidence" value="ECO:0007669"/>
    <property type="project" value="UniProtKB-UniRule"/>
</dbReference>
<dbReference type="GO" id="GO:0051156">
    <property type="term" value="P:glucose 6-phosphate metabolic process"/>
    <property type="evidence" value="ECO:0007669"/>
    <property type="project" value="TreeGrafter"/>
</dbReference>
<dbReference type="GO" id="GO:0006096">
    <property type="term" value="P:glycolytic process"/>
    <property type="evidence" value="ECO:0007669"/>
    <property type="project" value="UniProtKB-UniRule"/>
</dbReference>
<dbReference type="CDD" id="cd05015">
    <property type="entry name" value="SIS_PGI_1"/>
    <property type="match status" value="1"/>
</dbReference>
<dbReference type="CDD" id="cd05016">
    <property type="entry name" value="SIS_PGI_2"/>
    <property type="match status" value="1"/>
</dbReference>
<dbReference type="FunFam" id="1.10.1390.10:FF:000001">
    <property type="entry name" value="Glucose-6-phosphate isomerase"/>
    <property type="match status" value="1"/>
</dbReference>
<dbReference type="FunFam" id="3.40.50.10490:FF:000018">
    <property type="entry name" value="Glucose-6-phosphate isomerase"/>
    <property type="match status" value="1"/>
</dbReference>
<dbReference type="Gene3D" id="1.10.1390.10">
    <property type="match status" value="1"/>
</dbReference>
<dbReference type="Gene3D" id="3.40.50.10490">
    <property type="entry name" value="Glucose-6-phosphate isomerase like protein, domain 1"/>
    <property type="match status" value="2"/>
</dbReference>
<dbReference type="HAMAP" id="MF_00473">
    <property type="entry name" value="G6P_isomerase"/>
    <property type="match status" value="1"/>
</dbReference>
<dbReference type="InterPro" id="IPR001672">
    <property type="entry name" value="G6P_Isomerase"/>
</dbReference>
<dbReference type="InterPro" id="IPR023096">
    <property type="entry name" value="G6P_Isomerase_C"/>
</dbReference>
<dbReference type="InterPro" id="IPR018189">
    <property type="entry name" value="Phosphoglucose_isomerase_CS"/>
</dbReference>
<dbReference type="InterPro" id="IPR046348">
    <property type="entry name" value="SIS_dom_sf"/>
</dbReference>
<dbReference type="InterPro" id="IPR035476">
    <property type="entry name" value="SIS_PGI_1"/>
</dbReference>
<dbReference type="InterPro" id="IPR035482">
    <property type="entry name" value="SIS_PGI_2"/>
</dbReference>
<dbReference type="NCBIfam" id="NF001211">
    <property type="entry name" value="PRK00179.1"/>
    <property type="match status" value="1"/>
</dbReference>
<dbReference type="PANTHER" id="PTHR11469">
    <property type="entry name" value="GLUCOSE-6-PHOSPHATE ISOMERASE"/>
    <property type="match status" value="1"/>
</dbReference>
<dbReference type="PANTHER" id="PTHR11469:SF1">
    <property type="entry name" value="GLUCOSE-6-PHOSPHATE ISOMERASE"/>
    <property type="match status" value="1"/>
</dbReference>
<dbReference type="Pfam" id="PF00342">
    <property type="entry name" value="PGI"/>
    <property type="match status" value="1"/>
</dbReference>
<dbReference type="PRINTS" id="PR00662">
    <property type="entry name" value="G6PISOMERASE"/>
</dbReference>
<dbReference type="SUPFAM" id="SSF53697">
    <property type="entry name" value="SIS domain"/>
    <property type="match status" value="1"/>
</dbReference>
<dbReference type="PROSITE" id="PS00765">
    <property type="entry name" value="P_GLUCOSE_ISOMERASE_1"/>
    <property type="match status" value="1"/>
</dbReference>
<dbReference type="PROSITE" id="PS00174">
    <property type="entry name" value="P_GLUCOSE_ISOMERASE_2"/>
    <property type="match status" value="1"/>
</dbReference>
<dbReference type="PROSITE" id="PS51463">
    <property type="entry name" value="P_GLUCOSE_ISOMERASE_3"/>
    <property type="match status" value="1"/>
</dbReference>
<gene>
    <name evidence="1" type="primary">pgi</name>
    <name type="ordered locus">HPAG1_1105</name>
</gene>
<proteinExistence type="inferred from homology"/>
<sequence>MLTQLKTYPKLLKHYEEIKEAHMRDWFSKDKERASRYFVQFESLSLDYSKNRLNDTTLKLLFELANDCSLKEKIEAMFKGEKINTTEKRAVLHTALRSLNDTEILLDNMEVLKSVRSVLKRMRAFSDSVRSGKRLGYTNQVITDIVNIGIGGSDLGALMVCTALKRYGHPRLKMHFVSNVDGTQILDVLEKLNPASTLFIVASKTFSTQETLTNALTARKWFVERSGDEKHIAKHFVAVSTNKEAVQQFGIDEHNMFEFWDFVGGRYSLWSAIGLSIMIYLGKKNFNALLKGAYLMDEHFRNAPFESNLPVLMGLIGVWYINFFQSKSHLIAPYDQYLRHFPKFIQQLDMESNGKRISKKGETIPYDTCPVVWGDMGINAQHAFFQLLHQGTHLIPIDFIASLDKKPNAKGHHEILFSNVLAQAQAFMKGKSYEEALGELLFKGLDKDEAKDLAHHRVFFGNRPSNILLLEKISPSNIGALVALYEHKVFVQGVIWDINSFDQWGVELGKELAVPILQELEGHKSNAYFDSSTKHLIELYKNYNQ</sequence>
<organism>
    <name type="scientific">Helicobacter pylori (strain HPAG1)</name>
    <dbReference type="NCBI Taxonomy" id="357544"/>
    <lineage>
        <taxon>Bacteria</taxon>
        <taxon>Pseudomonadati</taxon>
        <taxon>Campylobacterota</taxon>
        <taxon>Epsilonproteobacteria</taxon>
        <taxon>Campylobacterales</taxon>
        <taxon>Helicobacteraceae</taxon>
        <taxon>Helicobacter</taxon>
    </lineage>
</organism>
<name>G6PI_HELPH</name>
<evidence type="ECO:0000255" key="1">
    <source>
        <dbReference type="HAMAP-Rule" id="MF_00473"/>
    </source>
</evidence>
<reference key="1">
    <citation type="journal article" date="2006" name="Proc. Natl. Acad. Sci. U.S.A.">
        <title>The complete genome sequence of a chronic atrophic gastritis Helicobacter pylori strain: evolution during disease progression.</title>
        <authorList>
            <person name="Oh J.D."/>
            <person name="Kling-Baeckhed H."/>
            <person name="Giannakis M."/>
            <person name="Xu J."/>
            <person name="Fulton R.S."/>
            <person name="Fulton L.A."/>
            <person name="Cordum H.S."/>
            <person name="Wang C."/>
            <person name="Elliott G."/>
            <person name="Edwards J."/>
            <person name="Mardis E.R."/>
            <person name="Engstrand L.G."/>
            <person name="Gordon J.I."/>
        </authorList>
    </citation>
    <scope>NUCLEOTIDE SEQUENCE [LARGE SCALE GENOMIC DNA]</scope>
    <source>
        <strain>HPAG1</strain>
    </source>
</reference>
<accession>Q1CSA0</accession>
<feature type="chain" id="PRO_0000252624" description="Glucose-6-phosphate isomerase">
    <location>
        <begin position="1"/>
        <end position="545"/>
    </location>
</feature>
<feature type="active site" description="Proton donor" evidence="1">
    <location>
        <position position="351"/>
    </location>
</feature>
<feature type="active site" evidence="1">
    <location>
        <position position="382"/>
    </location>
</feature>
<feature type="active site" evidence="1">
    <location>
        <position position="510"/>
    </location>
</feature>
<comment type="function">
    <text evidence="1">Catalyzes the reversible isomerization of glucose-6-phosphate to fructose-6-phosphate.</text>
</comment>
<comment type="catalytic activity">
    <reaction evidence="1">
        <text>alpha-D-glucose 6-phosphate = beta-D-fructose 6-phosphate</text>
        <dbReference type="Rhea" id="RHEA:11816"/>
        <dbReference type="ChEBI" id="CHEBI:57634"/>
        <dbReference type="ChEBI" id="CHEBI:58225"/>
        <dbReference type="EC" id="5.3.1.9"/>
    </reaction>
</comment>
<comment type="pathway">
    <text evidence="1">Carbohydrate biosynthesis; gluconeogenesis.</text>
</comment>
<comment type="pathway">
    <text evidence="1">Carbohydrate degradation; glycolysis; D-glyceraldehyde 3-phosphate and glycerone phosphate from D-glucose: step 2/4.</text>
</comment>
<comment type="subcellular location">
    <subcellularLocation>
        <location evidence="1">Cytoplasm</location>
    </subcellularLocation>
</comment>
<comment type="similarity">
    <text evidence="1">Belongs to the GPI family.</text>
</comment>
<protein>
    <recommendedName>
        <fullName evidence="1">Glucose-6-phosphate isomerase</fullName>
        <shortName evidence="1">GPI</shortName>
        <ecNumber evidence="1">5.3.1.9</ecNumber>
    </recommendedName>
    <alternativeName>
        <fullName evidence="1">Phosphoglucose isomerase</fullName>
        <shortName evidence="1">PGI</shortName>
    </alternativeName>
    <alternativeName>
        <fullName evidence="1">Phosphohexose isomerase</fullName>
        <shortName evidence="1">PHI</shortName>
    </alternativeName>
</protein>